<comment type="subcellular location">
    <subcellularLocation>
        <location evidence="1">Cell inner membrane</location>
        <topology evidence="1">Multi-pass membrane protein</topology>
    </subcellularLocation>
</comment>
<comment type="similarity">
    <text evidence="1">Belongs to the UPF0208 family.</text>
</comment>
<keyword id="KW-0997">Cell inner membrane</keyword>
<keyword id="KW-1003">Cell membrane</keyword>
<keyword id="KW-0472">Membrane</keyword>
<keyword id="KW-0812">Transmembrane</keyword>
<keyword id="KW-1133">Transmembrane helix</keyword>
<name>Y6015_HAEIE</name>
<reference key="1">
    <citation type="journal article" date="2007" name="Genome Biol.">
        <title>Characterization and modeling of the Haemophilus influenzae core and supragenomes based on the complete genomic sequences of Rd and 12 clinical nontypeable strains.</title>
        <authorList>
            <person name="Hogg J.S."/>
            <person name="Hu F.Z."/>
            <person name="Janto B."/>
            <person name="Boissy R."/>
            <person name="Hayes J."/>
            <person name="Keefe R."/>
            <person name="Post J.C."/>
            <person name="Ehrlich G.D."/>
        </authorList>
    </citation>
    <scope>NUCLEOTIDE SEQUENCE [LARGE SCALE GENOMIC DNA]</scope>
    <source>
        <strain>PittEE</strain>
    </source>
</reference>
<proteinExistence type="inferred from homology"/>
<gene>
    <name type="ordered locus">CGSHiEE_06015</name>
</gene>
<organism>
    <name type="scientific">Haemophilus influenzae (strain PittEE)</name>
    <dbReference type="NCBI Taxonomy" id="374930"/>
    <lineage>
        <taxon>Bacteria</taxon>
        <taxon>Pseudomonadati</taxon>
        <taxon>Pseudomonadota</taxon>
        <taxon>Gammaproteobacteria</taxon>
        <taxon>Pasteurellales</taxon>
        <taxon>Pasteurellaceae</taxon>
        <taxon>Haemophilus</taxon>
    </lineage>
</organism>
<evidence type="ECO:0000255" key="1">
    <source>
        <dbReference type="HAMAP-Rule" id="MF_01101"/>
    </source>
</evidence>
<feature type="chain" id="PRO_1000064975" description="UPF0208 membrane protein CGSHiEE_06015">
    <location>
        <begin position="1"/>
        <end position="147"/>
    </location>
</feature>
<feature type="transmembrane region" description="Helical" evidence="1">
    <location>
        <begin position="38"/>
        <end position="58"/>
    </location>
</feature>
<feature type="transmembrane region" description="Helical" evidence="1">
    <location>
        <begin position="67"/>
        <end position="87"/>
    </location>
</feature>
<dbReference type="EMBL" id="CP000671">
    <property type="protein sequence ID" value="ABQ98556.1"/>
    <property type="molecule type" value="Genomic_DNA"/>
</dbReference>
<dbReference type="KEGG" id="hip:CGSHiEE_06015"/>
<dbReference type="HOGENOM" id="CLU_128746_0_0_6"/>
<dbReference type="GO" id="GO:0005886">
    <property type="term" value="C:plasma membrane"/>
    <property type="evidence" value="ECO:0007669"/>
    <property type="project" value="UniProtKB-SubCell"/>
</dbReference>
<dbReference type="HAMAP" id="MF_01101">
    <property type="entry name" value="UPF0208"/>
    <property type="match status" value="1"/>
</dbReference>
<dbReference type="InterPro" id="IPR007334">
    <property type="entry name" value="UPF0208"/>
</dbReference>
<dbReference type="NCBIfam" id="NF002493">
    <property type="entry name" value="PRK01816.1"/>
    <property type="match status" value="1"/>
</dbReference>
<dbReference type="Pfam" id="PF04217">
    <property type="entry name" value="DUF412"/>
    <property type="match status" value="1"/>
</dbReference>
<sequence length="147" mass="17291">MAFFSIFKQGQIYLNTWPQEAKLGIIFPENRIMKATSFAQKFMPFVAVFAILWQQIYAKNDLMAFSIAILTALFALLIPFQGLYWLGKRANSPLENQSAVWFYDICERLKQQNEPLPFVQEKPTYQHLAEVLRKAQSKFERAFWQEI</sequence>
<protein>
    <recommendedName>
        <fullName evidence="1">UPF0208 membrane protein CGSHiEE_06015</fullName>
    </recommendedName>
</protein>
<accession>A5UCQ5</accession>